<reference key="1">
    <citation type="journal article" date="1993" name="Cell">
        <title>The 55 kd regulatory subunit of Drosophila protein phosphatase 2A is required for anaphase.</title>
        <authorList>
            <person name="Mayer-Jaekel R.E."/>
            <person name="Ohkura H."/>
            <person name="Gomes R."/>
            <person name="Sunkel C.E."/>
            <person name="Baumgartner S."/>
            <person name="Hemmings B.A."/>
            <person name="Glover D.M."/>
        </authorList>
    </citation>
    <scope>NUCLEOTIDE SEQUENCE [GENOMIC DNA / MRNA] (ISOFORMS A AND B)</scope>
</reference>
<reference key="2">
    <citation type="journal article" date="1993" name="Genes Dev.">
        <title>Mutation of twins encoding a regulator of protein phosphatase 2A leads to pattern duplication in Drosophila imaginal discs.</title>
        <authorList>
            <person name="Uemura T."/>
            <person name="Shiomi K."/>
            <person name="Togashi S."/>
            <person name="Takeichi M."/>
        </authorList>
    </citation>
    <scope>NUCLEOTIDE SEQUENCE [MRNA] (ISOFORM B)</scope>
    <source>
        <strain>Oregon-R</strain>
        <tissue>Eye imaginal disk</tissue>
    </source>
</reference>
<reference key="3">
    <citation type="journal article" date="2000" name="Science">
        <title>The genome sequence of Drosophila melanogaster.</title>
        <authorList>
            <person name="Adams M.D."/>
            <person name="Celniker S.E."/>
            <person name="Holt R.A."/>
            <person name="Evans C.A."/>
            <person name="Gocayne J.D."/>
            <person name="Amanatides P.G."/>
            <person name="Scherer S.E."/>
            <person name="Li P.W."/>
            <person name="Hoskins R.A."/>
            <person name="Galle R.F."/>
            <person name="George R.A."/>
            <person name="Lewis S.E."/>
            <person name="Richards S."/>
            <person name="Ashburner M."/>
            <person name="Henderson S.N."/>
            <person name="Sutton G.G."/>
            <person name="Wortman J.R."/>
            <person name="Yandell M.D."/>
            <person name="Zhang Q."/>
            <person name="Chen L.X."/>
            <person name="Brandon R.C."/>
            <person name="Rogers Y.-H.C."/>
            <person name="Blazej R.G."/>
            <person name="Champe M."/>
            <person name="Pfeiffer B.D."/>
            <person name="Wan K.H."/>
            <person name="Doyle C."/>
            <person name="Baxter E.G."/>
            <person name="Helt G."/>
            <person name="Nelson C.R."/>
            <person name="Miklos G.L.G."/>
            <person name="Abril J.F."/>
            <person name="Agbayani A."/>
            <person name="An H.-J."/>
            <person name="Andrews-Pfannkoch C."/>
            <person name="Baldwin D."/>
            <person name="Ballew R.M."/>
            <person name="Basu A."/>
            <person name="Baxendale J."/>
            <person name="Bayraktaroglu L."/>
            <person name="Beasley E.M."/>
            <person name="Beeson K.Y."/>
            <person name="Benos P.V."/>
            <person name="Berman B.P."/>
            <person name="Bhandari D."/>
            <person name="Bolshakov S."/>
            <person name="Borkova D."/>
            <person name="Botchan M.R."/>
            <person name="Bouck J."/>
            <person name="Brokstein P."/>
            <person name="Brottier P."/>
            <person name="Burtis K.C."/>
            <person name="Busam D.A."/>
            <person name="Butler H."/>
            <person name="Cadieu E."/>
            <person name="Center A."/>
            <person name="Chandra I."/>
            <person name="Cherry J.M."/>
            <person name="Cawley S."/>
            <person name="Dahlke C."/>
            <person name="Davenport L.B."/>
            <person name="Davies P."/>
            <person name="de Pablos B."/>
            <person name="Delcher A."/>
            <person name="Deng Z."/>
            <person name="Mays A.D."/>
            <person name="Dew I."/>
            <person name="Dietz S.M."/>
            <person name="Dodson K."/>
            <person name="Doup L.E."/>
            <person name="Downes M."/>
            <person name="Dugan-Rocha S."/>
            <person name="Dunkov B.C."/>
            <person name="Dunn P."/>
            <person name="Durbin K.J."/>
            <person name="Evangelista C.C."/>
            <person name="Ferraz C."/>
            <person name="Ferriera S."/>
            <person name="Fleischmann W."/>
            <person name="Fosler C."/>
            <person name="Gabrielian A.E."/>
            <person name="Garg N.S."/>
            <person name="Gelbart W.M."/>
            <person name="Glasser K."/>
            <person name="Glodek A."/>
            <person name="Gong F."/>
            <person name="Gorrell J.H."/>
            <person name="Gu Z."/>
            <person name="Guan P."/>
            <person name="Harris M."/>
            <person name="Harris N.L."/>
            <person name="Harvey D.A."/>
            <person name="Heiman T.J."/>
            <person name="Hernandez J.R."/>
            <person name="Houck J."/>
            <person name="Hostin D."/>
            <person name="Houston K.A."/>
            <person name="Howland T.J."/>
            <person name="Wei M.-H."/>
            <person name="Ibegwam C."/>
            <person name="Jalali M."/>
            <person name="Kalush F."/>
            <person name="Karpen G.H."/>
            <person name="Ke Z."/>
            <person name="Kennison J.A."/>
            <person name="Ketchum K.A."/>
            <person name="Kimmel B.E."/>
            <person name="Kodira C.D."/>
            <person name="Kraft C.L."/>
            <person name="Kravitz S."/>
            <person name="Kulp D."/>
            <person name="Lai Z."/>
            <person name="Lasko P."/>
            <person name="Lei Y."/>
            <person name="Levitsky A.A."/>
            <person name="Li J.H."/>
            <person name="Li Z."/>
            <person name="Liang Y."/>
            <person name="Lin X."/>
            <person name="Liu X."/>
            <person name="Mattei B."/>
            <person name="McIntosh T.C."/>
            <person name="McLeod M.P."/>
            <person name="McPherson D."/>
            <person name="Merkulov G."/>
            <person name="Milshina N.V."/>
            <person name="Mobarry C."/>
            <person name="Morris J."/>
            <person name="Moshrefi A."/>
            <person name="Mount S.M."/>
            <person name="Moy M."/>
            <person name="Murphy B."/>
            <person name="Murphy L."/>
            <person name="Muzny D.M."/>
            <person name="Nelson D.L."/>
            <person name="Nelson D.R."/>
            <person name="Nelson K.A."/>
            <person name="Nixon K."/>
            <person name="Nusskern D.R."/>
            <person name="Pacleb J.M."/>
            <person name="Palazzolo M."/>
            <person name="Pittman G.S."/>
            <person name="Pan S."/>
            <person name="Pollard J."/>
            <person name="Puri V."/>
            <person name="Reese M.G."/>
            <person name="Reinert K."/>
            <person name="Remington K."/>
            <person name="Saunders R.D.C."/>
            <person name="Scheeler F."/>
            <person name="Shen H."/>
            <person name="Shue B.C."/>
            <person name="Siden-Kiamos I."/>
            <person name="Simpson M."/>
            <person name="Skupski M.P."/>
            <person name="Smith T.J."/>
            <person name="Spier E."/>
            <person name="Spradling A.C."/>
            <person name="Stapleton M."/>
            <person name="Strong R."/>
            <person name="Sun E."/>
            <person name="Svirskas R."/>
            <person name="Tector C."/>
            <person name="Turner R."/>
            <person name="Venter E."/>
            <person name="Wang A.H."/>
            <person name="Wang X."/>
            <person name="Wang Z.-Y."/>
            <person name="Wassarman D.A."/>
            <person name="Weinstock G.M."/>
            <person name="Weissenbach J."/>
            <person name="Williams S.M."/>
            <person name="Woodage T."/>
            <person name="Worley K.C."/>
            <person name="Wu D."/>
            <person name="Yang S."/>
            <person name="Yao Q.A."/>
            <person name="Ye J."/>
            <person name="Yeh R.-F."/>
            <person name="Zaveri J.S."/>
            <person name="Zhan M."/>
            <person name="Zhang G."/>
            <person name="Zhao Q."/>
            <person name="Zheng L."/>
            <person name="Zheng X.H."/>
            <person name="Zhong F.N."/>
            <person name="Zhong W."/>
            <person name="Zhou X."/>
            <person name="Zhu S.C."/>
            <person name="Zhu X."/>
            <person name="Smith H.O."/>
            <person name="Gibbs R.A."/>
            <person name="Myers E.W."/>
            <person name="Rubin G.M."/>
            <person name="Venter J.C."/>
        </authorList>
    </citation>
    <scope>NUCLEOTIDE SEQUENCE [LARGE SCALE GENOMIC DNA]</scope>
    <source>
        <strain>Berkeley</strain>
    </source>
</reference>
<reference key="4">
    <citation type="journal article" date="2002" name="Genome Biol.">
        <title>Annotation of the Drosophila melanogaster euchromatic genome: a systematic review.</title>
        <authorList>
            <person name="Misra S."/>
            <person name="Crosby M.A."/>
            <person name="Mungall C.J."/>
            <person name="Matthews B.B."/>
            <person name="Campbell K.S."/>
            <person name="Hradecky P."/>
            <person name="Huang Y."/>
            <person name="Kaminker J.S."/>
            <person name="Millburn G.H."/>
            <person name="Prochnik S.E."/>
            <person name="Smith C.D."/>
            <person name="Tupy J.L."/>
            <person name="Whitfield E.J."/>
            <person name="Bayraktaroglu L."/>
            <person name="Berman B.P."/>
            <person name="Bettencourt B.R."/>
            <person name="Celniker S.E."/>
            <person name="de Grey A.D.N.J."/>
            <person name="Drysdale R.A."/>
            <person name="Harris N.L."/>
            <person name="Richter J."/>
            <person name="Russo S."/>
            <person name="Schroeder A.J."/>
            <person name="Shu S.Q."/>
            <person name="Stapleton M."/>
            <person name="Yamada C."/>
            <person name="Ashburner M."/>
            <person name="Gelbart W.M."/>
            <person name="Rubin G.M."/>
            <person name="Lewis S.E."/>
        </authorList>
    </citation>
    <scope>GENOME REANNOTATION</scope>
    <scope>ALTERNATIVE SPLICING</scope>
    <source>
        <strain>Berkeley</strain>
    </source>
</reference>
<reference key="5">
    <citation type="journal article" date="2002" name="Genome Biol.">
        <title>A Drosophila full-length cDNA resource.</title>
        <authorList>
            <person name="Stapleton M."/>
            <person name="Carlson J.W."/>
            <person name="Brokstein P."/>
            <person name="Yu C."/>
            <person name="Champe M."/>
            <person name="George R.A."/>
            <person name="Guarin H."/>
            <person name="Kronmiller B."/>
            <person name="Pacleb J.M."/>
            <person name="Park S."/>
            <person name="Wan K.H."/>
            <person name="Rubin G.M."/>
            <person name="Celniker S.E."/>
        </authorList>
    </citation>
    <scope>NUCLEOTIDE SEQUENCE [LARGE SCALE MRNA] (ISOFORM A)</scope>
    <source>
        <strain>Berkeley</strain>
        <tissue>Embryo</tissue>
    </source>
</reference>
<evidence type="ECO:0000256" key="1">
    <source>
        <dbReference type="SAM" id="MobiDB-lite"/>
    </source>
</evidence>
<evidence type="ECO:0000303" key="2">
    <source>
    </source>
</evidence>
<evidence type="ECO:0000303" key="3">
    <source>
    </source>
</evidence>
<evidence type="ECO:0000305" key="4"/>
<organism>
    <name type="scientific">Drosophila melanogaster</name>
    <name type="common">Fruit fly</name>
    <dbReference type="NCBI Taxonomy" id="7227"/>
    <lineage>
        <taxon>Eukaryota</taxon>
        <taxon>Metazoa</taxon>
        <taxon>Ecdysozoa</taxon>
        <taxon>Arthropoda</taxon>
        <taxon>Hexapoda</taxon>
        <taxon>Insecta</taxon>
        <taxon>Pterygota</taxon>
        <taxon>Neoptera</taxon>
        <taxon>Endopterygota</taxon>
        <taxon>Diptera</taxon>
        <taxon>Brachycera</taxon>
        <taxon>Muscomorpha</taxon>
        <taxon>Ephydroidea</taxon>
        <taxon>Drosophilidae</taxon>
        <taxon>Drosophila</taxon>
        <taxon>Sophophora</taxon>
    </lineage>
</organism>
<sequence>MGRWGRQSPVLEPPDPQMQTTPPPPTLPPRTFMRQSSITKIGNMLNTAININGAKKPASNGEASWCFSQIKGALDDDVTDADIISCVEFNHDGELLATGDKGGRVVIFQRDPASKAANPRRGEYNVYSTFQSHEPEFDYLKSLEIEEKINKIRWLQQKNPVHFLLSTNDKTVKLWKVSERDKSFGGYNTKEENGLIRDPQNVTALRVPSVKQIPLLVEASPRRTFANAHTYHINSISVNSDQETFLSADDLRINLWHLEVVNQSYNIVDIKPTNMEELTEVITAAEFHPTECNVFVYSSSKGTIRLCDMRSAALCDRHSKQFEEPENPTNRSFFSEIISSISDVKLSNSGRYMISRDYLSIKVWDLHMETKPIETYPVHEYLRAKLCSLYENDCIFDKFECCWNGKDSSIMTGSYNNFFRVFDRNSKKDVTLEASRDIIKPKTVLKPRKVCTGGKRKKDEISVDCLDFNKKILHTAWHPEENIIAVAATNNLFIFQDKF</sequence>
<comment type="function">
    <text>Could perform a substrate recognition function or could be responsible for targeting the enzyme complex to the appropriate subcellular compartment.</text>
</comment>
<comment type="subunit">
    <text>PP2A exists in several trimeric forms, all of which consist of a core composed of a catalytic subunit associated with a 65 kDa regulatory subunit (PR65) (subunit A). The core complex associates with a third, variable subunit (subunit B), which confers distinct properties to the holoenzyme.</text>
</comment>
<comment type="alternative products">
    <event type="alternative splicing"/>
    <isoform>
        <id>P36872-1</id>
        <name>A</name>
        <name>F</name>
        <sequence type="displayed"/>
    </isoform>
    <isoform>
        <id>P36872-2</id>
        <name>B</name>
        <name>C</name>
        <name>D</name>
        <name>E</name>
        <name>G</name>
        <name>H</name>
        <sequence type="described" ref="VSP_005105 VSP_005106"/>
    </isoform>
</comment>
<comment type="similarity">
    <text evidence="4">Belongs to the phosphatase 2A regulatory subunit B family.</text>
</comment>
<comment type="caution">
    <text evidence="4">It is uncertain whether Met-1, Met-18, Met-33 or Met-44 is the initiator.</text>
</comment>
<gene>
    <name type="primary">tws</name>
    <name type="synonym">aar</name>
    <name type="synonym">Pp2A-85F</name>
    <name type="ORF">CG6235</name>
</gene>
<proteinExistence type="evidence at transcript level"/>
<accession>P36872</accession>
<accession>A4V2M9</accession>
<accession>A4V2N0</accession>
<accession>Q9VH21</accession>
<accession>Q9VH22</accession>
<keyword id="KW-0025">Alternative splicing</keyword>
<keyword id="KW-1185">Reference proteome</keyword>
<keyword id="KW-0677">Repeat</keyword>
<keyword id="KW-0853">WD repeat</keyword>
<feature type="chain" id="PRO_0000071437" description="Protein phosphatase PP2A 55 kDa regulatory subunit">
    <location>
        <begin position="1"/>
        <end position="499"/>
    </location>
</feature>
<feature type="repeat" description="WD 1">
    <location>
        <begin position="79"/>
        <end position="118"/>
    </location>
</feature>
<feature type="repeat" description="WD 2">
    <location>
        <begin position="144"/>
        <end position="185"/>
    </location>
</feature>
<feature type="repeat" description="WD 3">
    <location>
        <begin position="228"/>
        <end position="266"/>
    </location>
</feature>
<feature type="repeat" description="WD 4">
    <location>
        <begin position="277"/>
        <end position="317"/>
    </location>
</feature>
<feature type="repeat" description="WD 5">
    <location>
        <begin position="336"/>
        <end position="374"/>
    </location>
</feature>
<feature type="repeat" description="WD 6">
    <location>
        <begin position="391"/>
        <end position="432"/>
    </location>
</feature>
<feature type="repeat" description="WD 7">
    <location>
        <begin position="467"/>
        <end position="498"/>
    </location>
</feature>
<feature type="region of interest" description="Disordered" evidence="1">
    <location>
        <begin position="1"/>
        <end position="30"/>
    </location>
</feature>
<feature type="compositionally biased region" description="Pro residues" evidence="1">
    <location>
        <begin position="11"/>
        <end position="28"/>
    </location>
</feature>
<feature type="splice variant" id="VSP_005105" description="In isoform B." evidence="2 3">
    <location>
        <begin position="1"/>
        <end position="56"/>
    </location>
</feature>
<feature type="splice variant" id="VSP_005106" description="In isoform B." evidence="2 3">
    <original>PAS</original>
    <variation>MAG</variation>
    <location>
        <begin position="57"/>
        <end position="59"/>
    </location>
</feature>
<feature type="sequence conflict" description="In Ref. 1; AAA99871." evidence="4" ref="1">
    <original>K</original>
    <variation>M</variation>
    <location>
        <position position="211"/>
    </location>
</feature>
<name>2ABA_DROME</name>
<protein>
    <recommendedName>
        <fullName>Protein phosphatase PP2A 55 kDa regulatory subunit</fullName>
        <shortName>PR55</shortName>
    </recommendedName>
    <alternativeName>
        <fullName>Protein phosphatase PP2A regulatory subunit B</fullName>
    </alternativeName>
    <alternativeName>
        <fullName>Protein twins</fullName>
    </alternativeName>
</protein>
<dbReference type="EMBL" id="D13004">
    <property type="protein sequence ID" value="BAA02367.1"/>
    <property type="molecule type" value="mRNA"/>
</dbReference>
<dbReference type="EMBL" id="L07581">
    <property type="protein sequence ID" value="AAA99870.1"/>
    <property type="molecule type" value="mRNA"/>
</dbReference>
<dbReference type="EMBL" id="L07583">
    <property type="protein sequence ID" value="AAA99871.1"/>
    <property type="molecule type" value="mRNA"/>
</dbReference>
<dbReference type="EMBL" id="L07585">
    <property type="status" value="NOT_ANNOTATED_CDS"/>
    <property type="molecule type" value="Genomic_DNA"/>
</dbReference>
<dbReference type="EMBL" id="L07586">
    <property type="protein sequence ID" value="AAB00371.1"/>
    <property type="molecule type" value="Genomic_DNA"/>
</dbReference>
<dbReference type="EMBL" id="L12544">
    <property type="protein sequence ID" value="AAB00371.1"/>
    <property type="status" value="JOINED"/>
    <property type="molecule type" value="Genomic_DNA"/>
</dbReference>
<dbReference type="EMBL" id="L07586">
    <property type="protein sequence ID" value="AAB00372.1"/>
    <property type="molecule type" value="Genomic_DNA"/>
</dbReference>
<dbReference type="EMBL" id="L12544">
    <property type="protein sequence ID" value="AAB00372.1"/>
    <property type="status" value="JOINED"/>
    <property type="molecule type" value="Genomic_DNA"/>
</dbReference>
<dbReference type="EMBL" id="AE014297">
    <property type="protein sequence ID" value="AAF54498.1"/>
    <property type="molecule type" value="Genomic_DNA"/>
</dbReference>
<dbReference type="EMBL" id="AE014297">
    <property type="protein sequence ID" value="AAF54499.3"/>
    <property type="molecule type" value="Genomic_DNA"/>
</dbReference>
<dbReference type="EMBL" id="AE014297">
    <property type="protein sequence ID" value="AAN13455.1"/>
    <property type="molecule type" value="Genomic_DNA"/>
</dbReference>
<dbReference type="EMBL" id="AE014297">
    <property type="protein sequence ID" value="AAN13456.1"/>
    <property type="molecule type" value="Genomic_DNA"/>
</dbReference>
<dbReference type="EMBL" id="AE014297">
    <property type="protein sequence ID" value="AAN13457.1"/>
    <property type="molecule type" value="Genomic_DNA"/>
</dbReference>
<dbReference type="EMBL" id="AE014297">
    <property type="protein sequence ID" value="AAN13458.1"/>
    <property type="molecule type" value="Genomic_DNA"/>
</dbReference>
<dbReference type="EMBL" id="AE014297">
    <property type="protein sequence ID" value="AAN13459.1"/>
    <property type="molecule type" value="Genomic_DNA"/>
</dbReference>
<dbReference type="EMBL" id="AE014297">
    <property type="protein sequence ID" value="AAN13460.1"/>
    <property type="molecule type" value="Genomic_DNA"/>
</dbReference>
<dbReference type="EMBL" id="AY061152">
    <property type="protein sequence ID" value="AAL28700.1"/>
    <property type="molecule type" value="mRNA"/>
</dbReference>
<dbReference type="PIR" id="A45778">
    <property type="entry name" value="A45778"/>
</dbReference>
<dbReference type="RefSeq" id="NP_001287269.1">
    <molecule id="P36872-1"/>
    <property type="nucleotide sequence ID" value="NM_001300340.1"/>
</dbReference>
<dbReference type="RefSeq" id="NP_476880.1">
    <molecule id="P36872-1"/>
    <property type="nucleotide sequence ID" value="NM_057532.4"/>
</dbReference>
<dbReference type="RefSeq" id="NP_476881.1">
    <molecule id="P36872-2"/>
    <property type="nucleotide sequence ID" value="NM_057533.3"/>
</dbReference>
<dbReference type="RefSeq" id="NP_599111.1">
    <molecule id="P36872-2"/>
    <property type="nucleotide sequence ID" value="NM_134284.3"/>
</dbReference>
<dbReference type="RefSeq" id="NP_599112.1">
    <molecule id="P36872-2"/>
    <property type="nucleotide sequence ID" value="NM_134285.2"/>
</dbReference>
<dbReference type="RefSeq" id="NP_599113.1">
    <molecule id="P36872-2"/>
    <property type="nucleotide sequence ID" value="NM_134286.3"/>
</dbReference>
<dbReference type="RefSeq" id="NP_731451.1">
    <molecule id="P36872-1"/>
    <property type="nucleotide sequence ID" value="NM_169329.2"/>
</dbReference>
<dbReference type="RefSeq" id="NP_731452.1">
    <molecule id="P36872-2"/>
    <property type="nucleotide sequence ID" value="NM_169330.2"/>
</dbReference>
<dbReference type="RefSeq" id="NP_731453.1">
    <molecule id="P36872-2"/>
    <property type="nucleotide sequence ID" value="NM_169331.2"/>
</dbReference>
<dbReference type="SMR" id="P36872"/>
<dbReference type="BioGRID" id="71024">
    <property type="interactions" value="39"/>
</dbReference>
<dbReference type="ComplexPortal" id="CPX-2293">
    <property type="entry name" value="TWS-protein phosphatase 2A complex"/>
</dbReference>
<dbReference type="DIP" id="DIP-19897N"/>
<dbReference type="FunCoup" id="P36872">
    <property type="interactions" value="1707"/>
</dbReference>
<dbReference type="IntAct" id="P36872">
    <property type="interactions" value="39"/>
</dbReference>
<dbReference type="STRING" id="7227.FBpp0311386"/>
<dbReference type="PaxDb" id="7227-FBpp0081665"/>
<dbReference type="DNASU" id="47877"/>
<dbReference type="EnsemblMetazoa" id="FBtr0082186">
    <molecule id="P36872-1"/>
    <property type="protein sequence ID" value="FBpp0081664"/>
    <property type="gene ID" value="FBgn0004889"/>
</dbReference>
<dbReference type="EnsemblMetazoa" id="FBtr0082187">
    <molecule id="P36872-1"/>
    <property type="protein sequence ID" value="FBpp0081665"/>
    <property type="gene ID" value="FBgn0004889"/>
</dbReference>
<dbReference type="EnsemblMetazoa" id="FBtr0082188">
    <molecule id="P36872-2"/>
    <property type="protein sequence ID" value="FBpp0081666"/>
    <property type="gene ID" value="FBgn0004889"/>
</dbReference>
<dbReference type="EnsemblMetazoa" id="FBtr0082189">
    <molecule id="P36872-2"/>
    <property type="protein sequence ID" value="FBpp0081667"/>
    <property type="gene ID" value="FBgn0004889"/>
</dbReference>
<dbReference type="EnsemblMetazoa" id="FBtr0082190">
    <molecule id="P36872-2"/>
    <property type="protein sequence ID" value="FBpp0081668"/>
    <property type="gene ID" value="FBgn0004889"/>
</dbReference>
<dbReference type="EnsemblMetazoa" id="FBtr0082191">
    <molecule id="P36872-2"/>
    <property type="protein sequence ID" value="FBpp0081669"/>
    <property type="gene ID" value="FBgn0004889"/>
</dbReference>
<dbReference type="EnsemblMetazoa" id="FBtr0082192">
    <molecule id="P36872-2"/>
    <property type="protein sequence ID" value="FBpp0081670"/>
    <property type="gene ID" value="FBgn0004889"/>
</dbReference>
<dbReference type="EnsemblMetazoa" id="FBtr0082193">
    <molecule id="P36872-2"/>
    <property type="protein sequence ID" value="FBpp0081671"/>
    <property type="gene ID" value="FBgn0004889"/>
</dbReference>
<dbReference type="EnsemblMetazoa" id="FBtr0345177">
    <molecule id="P36872-1"/>
    <property type="protein sequence ID" value="FBpp0311386"/>
    <property type="gene ID" value="FBgn0004889"/>
</dbReference>
<dbReference type="GeneID" id="47877"/>
<dbReference type="KEGG" id="dme:Dmel_CG6235"/>
<dbReference type="UCSC" id="CG6235-RC">
    <property type="organism name" value="d. melanogaster"/>
</dbReference>
<dbReference type="UCSC" id="CG6235-RF">
    <property type="organism name" value="d. melanogaster"/>
</dbReference>
<dbReference type="AGR" id="FB:FBgn0004889"/>
<dbReference type="CTD" id="47877"/>
<dbReference type="FlyBase" id="FBgn0004889">
    <property type="gene designation" value="tws"/>
</dbReference>
<dbReference type="VEuPathDB" id="VectorBase:FBgn0004889"/>
<dbReference type="eggNOG" id="KOG1354">
    <property type="taxonomic scope" value="Eukaryota"/>
</dbReference>
<dbReference type="GeneTree" id="ENSGT00950000182864"/>
<dbReference type="InParanoid" id="P36872"/>
<dbReference type="OMA" id="NQIKWCR"/>
<dbReference type="OrthoDB" id="6274823at2759"/>
<dbReference type="PhylomeDB" id="P36872"/>
<dbReference type="Reactome" id="R-DME-209155">
    <property type="pathway name" value="Phosphorylation of AXN and APC"/>
</dbReference>
<dbReference type="Reactome" id="R-DME-209190">
    <property type="pathway name" value="Phosphorylation of CI"/>
</dbReference>
<dbReference type="Reactome" id="R-DME-209214">
    <property type="pathway name" value="Phosphorylation of SMO"/>
</dbReference>
<dbReference type="Reactome" id="R-DME-209360">
    <property type="pathway name" value="Ubiquitination and proteolysis of phosphorylated CI"/>
</dbReference>
<dbReference type="Reactome" id="R-DME-209396">
    <property type="pathway name" value="Phosphorylation of ARM"/>
</dbReference>
<dbReference type="Reactome" id="R-DME-209413">
    <property type="pathway name" value="Assembly of the 'destruction complex'"/>
</dbReference>
<dbReference type="Reactome" id="R-DME-209440">
    <property type="pathway name" value="Recruitment of the 'destruction complex' to the receptor complex, the degradation of AXN and release of ARM"/>
</dbReference>
<dbReference type="Reactome" id="R-DME-209461">
    <property type="pathway name" value="Ubiquitination and degradation of phosphorylated ARM"/>
</dbReference>
<dbReference type="Reactome" id="R-DME-2995383">
    <property type="pathway name" value="Initiation of Nuclear Envelope (NE) Reformation"/>
</dbReference>
<dbReference type="Reactome" id="R-DME-432553">
    <property type="pathway name" value="Phosphorylation of PER and TIM"/>
</dbReference>
<dbReference type="Reactome" id="R-DME-432620">
    <property type="pathway name" value="Dephosphorylation of PER"/>
</dbReference>
<dbReference type="Reactome" id="R-DME-69231">
    <property type="pathway name" value="Cyclin D associated events in G1"/>
</dbReference>
<dbReference type="Reactome" id="R-DME-69273">
    <property type="pathway name" value="Cyclin A/B1/B2 associated events during G2/M transition"/>
</dbReference>
<dbReference type="Reactome" id="R-DME-975957">
    <property type="pathway name" value="Nonsense Mediated Decay (NMD) enhanced by the Exon Junction Complex (EJC)"/>
</dbReference>
<dbReference type="SignaLink" id="P36872"/>
<dbReference type="BioGRID-ORCS" id="47877">
    <property type="hits" value="1 hit in 3 CRISPR screens"/>
</dbReference>
<dbReference type="ChiTaRS" id="tws">
    <property type="organism name" value="fly"/>
</dbReference>
<dbReference type="GenomeRNAi" id="47877"/>
<dbReference type="PRO" id="PR:P36872"/>
<dbReference type="Proteomes" id="UP000000803">
    <property type="component" value="Chromosome 3R"/>
</dbReference>
<dbReference type="Bgee" id="FBgn0004889">
    <property type="expression patterns" value="Expressed in adult Malpighian tubule stellate cell of main segment in Malpighian tubule and 283 other cell types or tissues"/>
</dbReference>
<dbReference type="ExpressionAtlas" id="P36872">
    <property type="expression patterns" value="baseline and differential"/>
</dbReference>
<dbReference type="GO" id="GO:0005829">
    <property type="term" value="C:cytosol"/>
    <property type="evidence" value="ECO:0000314"/>
    <property type="project" value="FlyBase"/>
</dbReference>
<dbReference type="GO" id="GO:0005634">
    <property type="term" value="C:nucleus"/>
    <property type="evidence" value="ECO:0000314"/>
    <property type="project" value="FlyBase"/>
</dbReference>
<dbReference type="GO" id="GO:0000159">
    <property type="term" value="C:protein phosphatase type 2A complex"/>
    <property type="evidence" value="ECO:0000250"/>
    <property type="project" value="UniProtKB"/>
</dbReference>
<dbReference type="GO" id="GO:0019888">
    <property type="term" value="F:protein phosphatase regulator activity"/>
    <property type="evidence" value="ECO:0000315"/>
    <property type="project" value="FlyBase"/>
</dbReference>
<dbReference type="GO" id="GO:0007098">
    <property type="term" value="P:centrosome cycle"/>
    <property type="evidence" value="ECO:0000315"/>
    <property type="project" value="FlyBase"/>
</dbReference>
<dbReference type="GO" id="GO:0007447">
    <property type="term" value="P:imaginal disc pattern formation"/>
    <property type="evidence" value="ECO:0000315"/>
    <property type="project" value="UniProtKB"/>
</dbReference>
<dbReference type="GO" id="GO:0045201">
    <property type="term" value="P:maintenance of neuroblast polarity"/>
    <property type="evidence" value="ECO:0000315"/>
    <property type="project" value="FlyBase"/>
</dbReference>
<dbReference type="GO" id="GO:0007091">
    <property type="term" value="P:metaphase/anaphase transition of mitotic cell cycle"/>
    <property type="evidence" value="ECO:0000315"/>
    <property type="project" value="FlyBase"/>
</dbReference>
<dbReference type="GO" id="GO:0000278">
    <property type="term" value="P:mitotic cell cycle"/>
    <property type="evidence" value="ECO:0000315"/>
    <property type="project" value="FlyBase"/>
</dbReference>
<dbReference type="GO" id="GO:0007406">
    <property type="term" value="P:negative regulation of neuroblast proliferation"/>
    <property type="evidence" value="ECO:0000315"/>
    <property type="project" value="FlyBase"/>
</dbReference>
<dbReference type="GO" id="GO:0090263">
    <property type="term" value="P:positive regulation of canonical Wnt signaling pathway"/>
    <property type="evidence" value="ECO:0000315"/>
    <property type="project" value="FlyBase"/>
</dbReference>
<dbReference type="GO" id="GO:0045880">
    <property type="term" value="P:positive regulation of smoothened signaling pathway"/>
    <property type="evidence" value="ECO:0000315"/>
    <property type="project" value="FlyBase"/>
</dbReference>
<dbReference type="GO" id="GO:0045752">
    <property type="term" value="P:positive regulation of Toll signaling pathway"/>
    <property type="evidence" value="ECO:0000316"/>
    <property type="project" value="FlyBase"/>
</dbReference>
<dbReference type="GO" id="GO:0050821">
    <property type="term" value="P:protein stabilization"/>
    <property type="evidence" value="ECO:0000314"/>
    <property type="project" value="FlyBase"/>
</dbReference>
<dbReference type="GO" id="GO:0046599">
    <property type="term" value="P:regulation of centriole replication"/>
    <property type="evidence" value="ECO:0000315"/>
    <property type="project" value="FlyBase"/>
</dbReference>
<dbReference type="GO" id="GO:0030071">
    <property type="term" value="P:regulation of mitotic metaphase/anaphase transition"/>
    <property type="evidence" value="ECO:0000315"/>
    <property type="project" value="UniProtKB"/>
</dbReference>
<dbReference type="GO" id="GO:0007423">
    <property type="term" value="P:sensory organ development"/>
    <property type="evidence" value="ECO:0000315"/>
    <property type="project" value="FlyBase"/>
</dbReference>
<dbReference type="FunFam" id="2.130.10.10:FF:001892">
    <property type="entry name" value="Serine/threonine-protein phosphatase 2A 55 kDa regulatory subunit B"/>
    <property type="match status" value="1"/>
</dbReference>
<dbReference type="FunFam" id="2.130.10.10:FF:002951">
    <property type="entry name" value="Serine/threonine-protein phosphatase 2A 55 kDa regulatory subunit B"/>
    <property type="match status" value="1"/>
</dbReference>
<dbReference type="Gene3D" id="2.130.10.10">
    <property type="entry name" value="YVTN repeat-like/Quinoprotein amine dehydrogenase"/>
    <property type="match status" value="1"/>
</dbReference>
<dbReference type="InterPro" id="IPR000009">
    <property type="entry name" value="PP2A_PR55"/>
</dbReference>
<dbReference type="InterPro" id="IPR018067">
    <property type="entry name" value="PP2A_PR55_CS"/>
</dbReference>
<dbReference type="InterPro" id="IPR015943">
    <property type="entry name" value="WD40/YVTN_repeat-like_dom_sf"/>
</dbReference>
<dbReference type="InterPro" id="IPR036322">
    <property type="entry name" value="WD40_repeat_dom_sf"/>
</dbReference>
<dbReference type="InterPro" id="IPR001680">
    <property type="entry name" value="WD40_rpt"/>
</dbReference>
<dbReference type="PANTHER" id="PTHR11871">
    <property type="entry name" value="PROTEIN PHOSPHATASE PP2A REGULATORY SUBUNIT B"/>
    <property type="match status" value="1"/>
</dbReference>
<dbReference type="Pfam" id="PF00400">
    <property type="entry name" value="WD40"/>
    <property type="match status" value="2"/>
</dbReference>
<dbReference type="PIRSF" id="PIRSF037309">
    <property type="entry name" value="PP2A_PR55"/>
    <property type="match status" value="1"/>
</dbReference>
<dbReference type="PRINTS" id="PR00600">
    <property type="entry name" value="PP2APR55"/>
</dbReference>
<dbReference type="SMART" id="SM00320">
    <property type="entry name" value="WD40"/>
    <property type="match status" value="7"/>
</dbReference>
<dbReference type="SUPFAM" id="SSF50978">
    <property type="entry name" value="WD40 repeat-like"/>
    <property type="match status" value="1"/>
</dbReference>
<dbReference type="PROSITE" id="PS01024">
    <property type="entry name" value="PR55_1"/>
    <property type="match status" value="1"/>
</dbReference>
<dbReference type="PROSITE" id="PS01025">
    <property type="entry name" value="PR55_2"/>
    <property type="match status" value="1"/>
</dbReference>